<comment type="function">
    <text evidence="1 5">Modulates blood feeding of female mosquitoes on vertebrate species by binding and sequestering different mediators involved in the host response (By similarity). Binds serotonin, noradrenaline, histamine and adrenaline (PubMed:16301315). Inhibits histamine-, serotonin- and noradrenaline-induced smooth muscle contraction (PubMed:16301315). Exhibits vasodilating activity (PubMed:16301315).</text>
</comment>
<comment type="subcellular location">
    <subcellularLocation>
        <location evidence="6">Secreted</location>
    </subcellularLocation>
</comment>
<comment type="tissue specificity">
    <text evidence="4 6 7">Female saliva (at protein level) (PubMed:17913537). Female salivary gland (PubMed:9990055). Not detected in female carcass without salivary glands (PubMed:9990055). Not detected in male tissues (PubMed:11841502, PubMed:9990055).</text>
</comment>
<comment type="developmental stage">
    <text evidence="4">Not detected in embryo, larval and pupal stages.</text>
</comment>
<comment type="similarity">
    <text evidence="9">Belongs to the PBP/GOBP family.</text>
</comment>
<evidence type="ECO:0000250" key="1">
    <source>
        <dbReference type="UniProtKB" id="P18153"/>
    </source>
</evidence>
<evidence type="ECO:0000250" key="2">
    <source>
        <dbReference type="UniProtKB" id="Q7PNF2"/>
    </source>
</evidence>
<evidence type="ECO:0000255" key="3"/>
<evidence type="ECO:0000269" key="4">
    <source>
    </source>
</evidence>
<evidence type="ECO:0000269" key="5">
    <source>
    </source>
</evidence>
<evidence type="ECO:0000269" key="6">
    <source>
    </source>
</evidence>
<evidence type="ECO:0000269" key="7">
    <source>
    </source>
</evidence>
<evidence type="ECO:0000303" key="8">
    <source>
    </source>
</evidence>
<evidence type="ECO:0000305" key="9"/>
<evidence type="ECO:0000312" key="10">
    <source>
        <dbReference type="EMBL" id="AAK84944.1"/>
    </source>
</evidence>
<evidence type="ECO:0000312" key="11">
    <source>
        <dbReference type="EMBL" id="CAA03872.1"/>
    </source>
</evidence>
<evidence type="ECO:0000312" key="12">
    <source>
        <dbReference type="EMBL" id="CAB39728.1"/>
    </source>
</evidence>
<evidence type="ECO:0000312" key="13">
    <source>
        <dbReference type="EMBL" id="EAA12290.2"/>
    </source>
</evidence>
<evidence type="ECO:0000312" key="14">
    <source>
        <dbReference type="Proteomes" id="UP000007062"/>
    </source>
</evidence>
<gene>
    <name evidence="8" type="primary">D7r2</name>
    <name evidence="13" type="ORF">AgaP_AGAP008282</name>
</gene>
<feature type="signal peptide" evidence="3">
    <location>
        <begin position="1"/>
        <end position="21"/>
    </location>
</feature>
<feature type="chain" id="PRO_5014589532" description="Short form salivary protein D7R2" evidence="3">
    <location>
        <begin position="22"/>
        <end position="168"/>
    </location>
</feature>
<feature type="binding site" evidence="2">
    <location>
        <position position="31"/>
    </location>
    <ligand>
        <name>noradrenaline</name>
        <dbReference type="ChEBI" id="CHEBI:166902"/>
    </ligand>
</feature>
<feature type="binding site" evidence="2">
    <location>
        <position position="31"/>
    </location>
    <ligand>
        <name>serotonin</name>
        <dbReference type="ChEBI" id="CHEBI:350546"/>
    </ligand>
</feature>
<feature type="binding site" evidence="2">
    <location>
        <position position="46"/>
    </location>
    <ligand>
        <name>noradrenaline</name>
        <dbReference type="ChEBI" id="CHEBI:166902"/>
    </ligand>
</feature>
<feature type="binding site" evidence="2">
    <location>
        <position position="59"/>
    </location>
    <ligand>
        <name>serotonin</name>
        <dbReference type="ChEBI" id="CHEBI:350546"/>
    </ligand>
</feature>
<feature type="binding site" evidence="2">
    <location>
        <position position="118"/>
    </location>
    <ligand>
        <name>histamine</name>
        <dbReference type="ChEBI" id="CHEBI:58432"/>
    </ligand>
</feature>
<feature type="binding site" evidence="2">
    <location>
        <position position="118"/>
    </location>
    <ligand>
        <name>serotonin</name>
        <dbReference type="ChEBI" id="CHEBI:350546"/>
    </ligand>
</feature>
<feature type="binding site" evidence="2">
    <location>
        <position position="135"/>
    </location>
    <ligand>
        <name>histamine</name>
        <dbReference type="ChEBI" id="CHEBI:58432"/>
    </ligand>
</feature>
<feature type="binding site" evidence="2">
    <location>
        <position position="135"/>
    </location>
    <ligand>
        <name>noradrenaline</name>
        <dbReference type="ChEBI" id="CHEBI:166902"/>
    </ligand>
</feature>
<feature type="binding site" evidence="2">
    <location>
        <position position="135"/>
    </location>
    <ligand>
        <name>serotonin</name>
        <dbReference type="ChEBI" id="CHEBI:350546"/>
    </ligand>
</feature>
<feature type="binding site" evidence="2">
    <location>
        <position position="138"/>
    </location>
    <ligand>
        <name>histamine</name>
        <dbReference type="ChEBI" id="CHEBI:58432"/>
    </ligand>
</feature>
<feature type="binding site" evidence="2">
    <location>
        <position position="138"/>
    </location>
    <ligand>
        <name>noradrenaline</name>
        <dbReference type="ChEBI" id="CHEBI:166902"/>
    </ligand>
</feature>
<feature type="binding site" evidence="2">
    <location>
        <position position="138"/>
    </location>
    <ligand>
        <name>serotonin</name>
        <dbReference type="ChEBI" id="CHEBI:350546"/>
    </ligand>
</feature>
<feature type="disulfide bond" evidence="2">
    <location>
        <begin position="30"/>
        <end position="62"/>
    </location>
</feature>
<feature type="disulfide bond" evidence="2">
    <location>
        <begin position="43"/>
        <end position="168"/>
    </location>
</feature>
<feature type="disulfide bond" evidence="2">
    <location>
        <begin position="101"/>
        <end position="120"/>
    </location>
</feature>
<feature type="sequence conflict" description="In Ref. 3; CAA03872." evidence="9" ref="3">
    <original>N</original>
    <variation>D</variation>
    <location>
        <position position="137"/>
    </location>
</feature>
<organism evidence="12">
    <name type="scientific">Anopheles gambiae</name>
    <name type="common">African malaria mosquito</name>
    <dbReference type="NCBI Taxonomy" id="7165"/>
    <lineage>
        <taxon>Eukaryota</taxon>
        <taxon>Metazoa</taxon>
        <taxon>Ecdysozoa</taxon>
        <taxon>Arthropoda</taxon>
        <taxon>Hexapoda</taxon>
        <taxon>Insecta</taxon>
        <taxon>Pterygota</taxon>
        <taxon>Neoptera</taxon>
        <taxon>Endopterygota</taxon>
        <taxon>Diptera</taxon>
        <taxon>Nematocera</taxon>
        <taxon>Culicoidea</taxon>
        <taxon>Culicidae</taxon>
        <taxon>Anophelinae</taxon>
        <taxon>Anopheles</taxon>
    </lineage>
</organism>
<protein>
    <recommendedName>
        <fullName evidence="9">Short form salivary protein D7R2</fullName>
    </recommendedName>
    <alternativeName>
        <fullName evidence="12">D7-related 2 protein</fullName>
    </alternativeName>
</protein>
<name>D7R2_ANOGA</name>
<accession>Q9UB31</accession>
<accession>O76815</accession>
<accession>Q7Q486</accession>
<reference evidence="10 12" key="1">
    <citation type="journal article" date="2002" name="Insect Mol. Biol.">
        <title>A cluster of four D7-related genes is expressed in the salivary glands of the African malaria vector Anopheles gambiae.</title>
        <authorList>
            <person name="Arca' B."/>
            <person name="Lombardo F."/>
            <person name="Lanfrancotti A."/>
            <person name="Spanos L."/>
            <person name="Veneri M."/>
            <person name="Louis C."/>
            <person name="Coluzzi M."/>
        </authorList>
    </citation>
    <scope>NUCLEOTIDE SEQUENCE [GENOMIC DNA / MRNA]</scope>
    <scope>TISSUE SPECIFICITY</scope>
    <scope>DEVELOPMENTAL STAGE</scope>
    <source>
        <strain evidence="12">Gasua</strain>
    </source>
</reference>
<reference evidence="14" key="2">
    <citation type="journal article" date="2002" name="Science">
        <title>The genome sequence of the malaria mosquito Anopheles gambiae.</title>
        <authorList>
            <person name="Holt R.A."/>
            <person name="Subramanian G.M."/>
            <person name="Halpern A."/>
            <person name="Sutton G.G."/>
            <person name="Charlab R."/>
            <person name="Nusskern D.R."/>
            <person name="Wincker P."/>
            <person name="Clark A.G."/>
            <person name="Ribeiro J.M.C."/>
            <person name="Wides R."/>
            <person name="Salzberg S.L."/>
            <person name="Loftus B.J."/>
            <person name="Yandell M.D."/>
            <person name="Majoros W.H."/>
            <person name="Rusch D.B."/>
            <person name="Lai Z."/>
            <person name="Kraft C.L."/>
            <person name="Abril J.F."/>
            <person name="Anthouard V."/>
            <person name="Arensburger P."/>
            <person name="Atkinson P.W."/>
            <person name="Baden H."/>
            <person name="de Berardinis V."/>
            <person name="Baldwin D."/>
            <person name="Benes V."/>
            <person name="Biedler J."/>
            <person name="Blass C."/>
            <person name="Bolanos R."/>
            <person name="Boscus D."/>
            <person name="Barnstead M."/>
            <person name="Cai S."/>
            <person name="Center A."/>
            <person name="Chaturverdi K."/>
            <person name="Christophides G.K."/>
            <person name="Chrystal M.A.M."/>
            <person name="Clamp M."/>
            <person name="Cravchik A."/>
            <person name="Curwen V."/>
            <person name="Dana A."/>
            <person name="Delcher A."/>
            <person name="Dew I."/>
            <person name="Evans C.A."/>
            <person name="Flanigan M."/>
            <person name="Grundschober-Freimoser A."/>
            <person name="Friedli L."/>
            <person name="Gu Z."/>
            <person name="Guan P."/>
            <person name="Guigo R."/>
            <person name="Hillenmeyer M.E."/>
            <person name="Hladun S.L."/>
            <person name="Hogan J.R."/>
            <person name="Hong Y.S."/>
            <person name="Hoover J."/>
            <person name="Jaillon O."/>
            <person name="Ke Z."/>
            <person name="Kodira C.D."/>
            <person name="Kokoza E."/>
            <person name="Koutsos A."/>
            <person name="Letunic I."/>
            <person name="Levitsky A.A."/>
            <person name="Liang Y."/>
            <person name="Lin J.-J."/>
            <person name="Lobo N.F."/>
            <person name="Lopez J.R."/>
            <person name="Malek J.A."/>
            <person name="McIntosh T.C."/>
            <person name="Meister S."/>
            <person name="Miller J.R."/>
            <person name="Mobarry C."/>
            <person name="Mongin E."/>
            <person name="Murphy S.D."/>
            <person name="O'Brochta D.A."/>
            <person name="Pfannkoch C."/>
            <person name="Qi R."/>
            <person name="Regier M.A."/>
            <person name="Remington K."/>
            <person name="Shao H."/>
            <person name="Sharakhova M.V."/>
            <person name="Sitter C.D."/>
            <person name="Shetty J."/>
            <person name="Smith T.J."/>
            <person name="Strong R."/>
            <person name="Sun J."/>
            <person name="Thomasova D."/>
            <person name="Ton L.Q."/>
            <person name="Topalis P."/>
            <person name="Tu Z.J."/>
            <person name="Unger M.F."/>
            <person name="Walenz B."/>
            <person name="Wang A.H."/>
            <person name="Wang J."/>
            <person name="Wang M."/>
            <person name="Wang X."/>
            <person name="Woodford K.J."/>
            <person name="Wortman J.R."/>
            <person name="Wu M."/>
            <person name="Yao A."/>
            <person name="Zdobnov E.M."/>
            <person name="Zhang H."/>
            <person name="Zhao Q."/>
            <person name="Zhao S."/>
            <person name="Zhu S.C."/>
            <person name="Zhimulev I."/>
            <person name="Coluzzi M."/>
            <person name="della Torre A."/>
            <person name="Roth C.W."/>
            <person name="Louis C."/>
            <person name="Kalush F."/>
            <person name="Mural R.J."/>
            <person name="Myers E.W."/>
            <person name="Adams M.D."/>
            <person name="Smith H.O."/>
            <person name="Broder S."/>
            <person name="Gardner M.J."/>
            <person name="Fraser C.M."/>
            <person name="Birney E."/>
            <person name="Bork P."/>
            <person name="Brey P.T."/>
            <person name="Venter J.C."/>
            <person name="Weissenbach J."/>
            <person name="Kafatos F.C."/>
            <person name="Collins F.H."/>
            <person name="Hoffman S.L."/>
        </authorList>
    </citation>
    <scope>NUCLEOTIDE SEQUENCE [LARGE SCALE GENOMIC DNA]</scope>
    <source>
        <strain evidence="14">PEST</strain>
    </source>
</reference>
<reference evidence="11" key="3">
    <citation type="journal article" date="1999" name="Proc. Natl. Acad. Sci. U.S.A.">
        <title>Trapping cDNAs encoding secreted proteins from the salivary glands of the malaria vector Anopheles gambiae.</title>
        <authorList>
            <person name="Arca B."/>
            <person name="Lombardo F."/>
            <person name="de Lara Capurro M."/>
            <person name="della Torre A."/>
            <person name="Dimopoulos G."/>
            <person name="James A.A."/>
            <person name="Coluzzi M."/>
        </authorList>
    </citation>
    <scope>NUCLEOTIDE SEQUENCE [MRNA] OF 1-150</scope>
    <scope>TISSUE SPECIFICITY</scope>
    <source>
        <strain evidence="11">Gasua</strain>
    </source>
</reference>
<reference evidence="9" key="4">
    <citation type="journal article" date="2006" name="J. Biol. Chem.">
        <title>Function and evolution of a mosquito salivary protein family.</title>
        <authorList>
            <person name="Calvo E."/>
            <person name="Mans B.J."/>
            <person name="Andersen J.F."/>
            <person name="Ribeiro J.M."/>
        </authorList>
    </citation>
    <scope>FUNCTION</scope>
    <source>
        <strain evidence="8">Giles</strain>
    </source>
</reference>
<reference key="5">
    <citation type="journal article" date="2007" name="Microbes Infect.">
        <title>Antibody response against saliva antigens of Anopheles gambiae and Aedes aegypti in travellers in tropical Africa.</title>
        <authorList>
            <person name="Orlandi-Pradines E."/>
            <person name="Almeras L."/>
            <person name="Denis de Senneville L."/>
            <person name="Barbe S."/>
            <person name="Remoue F."/>
            <person name="Villard C."/>
            <person name="Cornelie S."/>
            <person name="Penhoat K."/>
            <person name="Pascual A."/>
            <person name="Bourgouin C."/>
            <person name="Fontenille D."/>
            <person name="Bonnet J."/>
            <person name="Corre-Catelin N."/>
            <person name="Reiter P."/>
            <person name="Pages F."/>
            <person name="Laffite D."/>
            <person name="Boulanger D."/>
            <person name="Simondon F."/>
            <person name="Pradines B."/>
            <person name="Fusai T."/>
            <person name="Rogier C."/>
        </authorList>
    </citation>
    <scope>IDENTIFICATION BY MASS SPECTROMETRY</scope>
    <scope>SUBCELLULAR LOCATION</scope>
    <scope>TISSUE SPECIFICITY</scope>
</reference>
<proteinExistence type="evidence at protein level"/>
<dbReference type="EMBL" id="AJ133853">
    <property type="protein sequence ID" value="CAB39728.1"/>
    <property type="molecule type" value="mRNA"/>
</dbReference>
<dbReference type="EMBL" id="AY045760">
    <property type="protein sequence ID" value="AAK84944.1"/>
    <property type="molecule type" value="Genomic_DNA"/>
</dbReference>
<dbReference type="EMBL" id="AAAB01008964">
    <property type="protein sequence ID" value="EAA12290.2"/>
    <property type="molecule type" value="Genomic_DNA"/>
</dbReference>
<dbReference type="EMBL" id="AJ000036">
    <property type="protein sequence ID" value="CAA03872.1"/>
    <property type="molecule type" value="mRNA"/>
</dbReference>
<dbReference type="SMR" id="Q9UB31"/>
<dbReference type="STRING" id="7165.AGAP008282-PA"/>
<dbReference type="PaxDb" id="7165-AGAP008282-PA"/>
<dbReference type="EnsemblMetazoa" id="AGAP008282-RA">
    <property type="protein sequence ID" value="AGAP008282-PA"/>
    <property type="gene ID" value="AGAP008282"/>
</dbReference>
<dbReference type="GeneID" id="1277700"/>
<dbReference type="KEGG" id="aga:1277700"/>
<dbReference type="VEuPathDB" id="VectorBase:AGAMI1_010274"/>
<dbReference type="VEuPathDB" id="VectorBase:AGAP008282"/>
<dbReference type="HOGENOM" id="CLU_1612198_0_0_1"/>
<dbReference type="InParanoid" id="Q9UB31"/>
<dbReference type="OMA" id="DKHMQCV"/>
<dbReference type="Proteomes" id="UP000007062">
    <property type="component" value="Chromosome 3R"/>
</dbReference>
<dbReference type="GO" id="GO:0005615">
    <property type="term" value="C:extracellular space"/>
    <property type="evidence" value="ECO:0000314"/>
    <property type="project" value="UniProtKB"/>
</dbReference>
<dbReference type="GO" id="GO:0005549">
    <property type="term" value="F:odorant binding"/>
    <property type="evidence" value="ECO:0007669"/>
    <property type="project" value="InterPro"/>
</dbReference>
<dbReference type="GO" id="GO:0007608">
    <property type="term" value="P:sensory perception of smell"/>
    <property type="evidence" value="ECO:0000318"/>
    <property type="project" value="GO_Central"/>
</dbReference>
<dbReference type="GO" id="GO:0042311">
    <property type="term" value="P:vasodilation"/>
    <property type="evidence" value="ECO:0007669"/>
    <property type="project" value="UniProtKB-KW"/>
</dbReference>
<dbReference type="CDD" id="cd23992">
    <property type="entry name" value="PBP_GOBP"/>
    <property type="match status" value="1"/>
</dbReference>
<dbReference type="FunFam" id="1.10.238.20:FF:000008">
    <property type="entry name" value="D7-related 4 protein"/>
    <property type="match status" value="1"/>
</dbReference>
<dbReference type="Gene3D" id="1.10.238.20">
    <property type="entry name" value="Pheromone/general odorant binding protein domain"/>
    <property type="match status" value="1"/>
</dbReference>
<dbReference type="InterPro" id="IPR006170">
    <property type="entry name" value="PBP/GOBP"/>
</dbReference>
<dbReference type="InterPro" id="IPR036728">
    <property type="entry name" value="PBP_GOBP_sf"/>
</dbReference>
<dbReference type="Pfam" id="PF01395">
    <property type="entry name" value="PBP_GOBP"/>
    <property type="match status" value="1"/>
</dbReference>
<dbReference type="SMART" id="SM00708">
    <property type="entry name" value="PhBP"/>
    <property type="match status" value="1"/>
</dbReference>
<dbReference type="SUPFAM" id="SSF47565">
    <property type="entry name" value="Insect pheromone/odorant-binding proteins"/>
    <property type="match status" value="1"/>
</dbReference>
<keyword id="KW-1015">Disulfide bond</keyword>
<keyword id="KW-1185">Reference proteome</keyword>
<keyword id="KW-0964">Secreted</keyword>
<keyword id="KW-0732">Signal</keyword>
<keyword id="KW-0838">Vasoactive</keyword>
<keyword id="KW-0840">Vasodilator</keyword>
<sequence>MFKKLLLSVGLVWCLISLGQARKESTVEECEKNIGDSLKDRVCELRQYTPVSSDDMDKHMQCVLEVVGFVDGNGEVKESVLLELLQRVDSGVNHAANMKKCVTEASTSGSDKKANTFYTCFLGTSSLAGFKNAVDYNELLKAGKMQTSDPFDMNRVAALIKEIDDGLC</sequence>